<reference key="1">
    <citation type="journal article" date="2008" name="J. Bacteriol.">
        <title>Insights into plant cell wall degradation from the genome sequence of the soil bacterium Cellvibrio japonicus.</title>
        <authorList>
            <person name="DeBoy R.T."/>
            <person name="Mongodin E.F."/>
            <person name="Fouts D.E."/>
            <person name="Tailford L.E."/>
            <person name="Khouri H."/>
            <person name="Emerson J.B."/>
            <person name="Mohamoud Y."/>
            <person name="Watkins K."/>
            <person name="Henrissat B."/>
            <person name="Gilbert H.J."/>
            <person name="Nelson K.E."/>
        </authorList>
    </citation>
    <scope>NUCLEOTIDE SEQUENCE [LARGE SCALE GENOMIC DNA]</scope>
    <source>
        <strain>Ueda107</strain>
    </source>
</reference>
<name>RS19_CELJU</name>
<gene>
    <name evidence="1" type="primary">rpsS</name>
    <name type="ordered locus">CJA_0703</name>
</gene>
<keyword id="KW-1185">Reference proteome</keyword>
<keyword id="KW-0687">Ribonucleoprotein</keyword>
<keyword id="KW-0689">Ribosomal protein</keyword>
<keyword id="KW-0694">RNA-binding</keyword>
<keyword id="KW-0699">rRNA-binding</keyword>
<feature type="chain" id="PRO_1000127944" description="Small ribosomal subunit protein uS19">
    <location>
        <begin position="1"/>
        <end position="92"/>
    </location>
</feature>
<sequence>MPRSLKKGPFIDLHLIKKVEAAIASNDRRPIKTWSRRSMILPEMVGLTLAVHNGRQHVPVLVNEEMVGHKLGEFAATRTYRGHAADKKAKKR</sequence>
<protein>
    <recommendedName>
        <fullName evidence="1">Small ribosomal subunit protein uS19</fullName>
    </recommendedName>
    <alternativeName>
        <fullName evidence="2">30S ribosomal protein S19</fullName>
    </alternativeName>
</protein>
<dbReference type="EMBL" id="CP000934">
    <property type="protein sequence ID" value="ACE83603.1"/>
    <property type="molecule type" value="Genomic_DNA"/>
</dbReference>
<dbReference type="RefSeq" id="WP_012486366.1">
    <property type="nucleotide sequence ID" value="NC_010995.1"/>
</dbReference>
<dbReference type="SMR" id="B3PK41"/>
<dbReference type="STRING" id="498211.CJA_0703"/>
<dbReference type="KEGG" id="cja:CJA_0703"/>
<dbReference type="eggNOG" id="COG0185">
    <property type="taxonomic scope" value="Bacteria"/>
</dbReference>
<dbReference type="HOGENOM" id="CLU_144911_0_1_6"/>
<dbReference type="OrthoDB" id="9797833at2"/>
<dbReference type="Proteomes" id="UP000001036">
    <property type="component" value="Chromosome"/>
</dbReference>
<dbReference type="GO" id="GO:0005737">
    <property type="term" value="C:cytoplasm"/>
    <property type="evidence" value="ECO:0007669"/>
    <property type="project" value="UniProtKB-ARBA"/>
</dbReference>
<dbReference type="GO" id="GO:0015935">
    <property type="term" value="C:small ribosomal subunit"/>
    <property type="evidence" value="ECO:0007669"/>
    <property type="project" value="InterPro"/>
</dbReference>
<dbReference type="GO" id="GO:0019843">
    <property type="term" value="F:rRNA binding"/>
    <property type="evidence" value="ECO:0007669"/>
    <property type="project" value="UniProtKB-UniRule"/>
</dbReference>
<dbReference type="GO" id="GO:0003735">
    <property type="term" value="F:structural constituent of ribosome"/>
    <property type="evidence" value="ECO:0007669"/>
    <property type="project" value="InterPro"/>
</dbReference>
<dbReference type="GO" id="GO:0000028">
    <property type="term" value="P:ribosomal small subunit assembly"/>
    <property type="evidence" value="ECO:0007669"/>
    <property type="project" value="TreeGrafter"/>
</dbReference>
<dbReference type="GO" id="GO:0006412">
    <property type="term" value="P:translation"/>
    <property type="evidence" value="ECO:0007669"/>
    <property type="project" value="UniProtKB-UniRule"/>
</dbReference>
<dbReference type="FunFam" id="3.30.860.10:FF:000001">
    <property type="entry name" value="30S ribosomal protein S19"/>
    <property type="match status" value="1"/>
</dbReference>
<dbReference type="Gene3D" id="3.30.860.10">
    <property type="entry name" value="30s Ribosomal Protein S19, Chain A"/>
    <property type="match status" value="1"/>
</dbReference>
<dbReference type="HAMAP" id="MF_00531">
    <property type="entry name" value="Ribosomal_uS19"/>
    <property type="match status" value="1"/>
</dbReference>
<dbReference type="InterPro" id="IPR002222">
    <property type="entry name" value="Ribosomal_uS19"/>
</dbReference>
<dbReference type="InterPro" id="IPR005732">
    <property type="entry name" value="Ribosomal_uS19_bac-type"/>
</dbReference>
<dbReference type="InterPro" id="IPR020934">
    <property type="entry name" value="Ribosomal_uS19_CS"/>
</dbReference>
<dbReference type="InterPro" id="IPR023575">
    <property type="entry name" value="Ribosomal_uS19_SF"/>
</dbReference>
<dbReference type="NCBIfam" id="TIGR01050">
    <property type="entry name" value="rpsS_bact"/>
    <property type="match status" value="1"/>
</dbReference>
<dbReference type="PANTHER" id="PTHR11880">
    <property type="entry name" value="RIBOSOMAL PROTEIN S19P FAMILY MEMBER"/>
    <property type="match status" value="1"/>
</dbReference>
<dbReference type="PANTHER" id="PTHR11880:SF8">
    <property type="entry name" value="SMALL RIBOSOMAL SUBUNIT PROTEIN US19M"/>
    <property type="match status" value="1"/>
</dbReference>
<dbReference type="Pfam" id="PF00203">
    <property type="entry name" value="Ribosomal_S19"/>
    <property type="match status" value="1"/>
</dbReference>
<dbReference type="PIRSF" id="PIRSF002144">
    <property type="entry name" value="Ribosomal_S19"/>
    <property type="match status" value="1"/>
</dbReference>
<dbReference type="PRINTS" id="PR00975">
    <property type="entry name" value="RIBOSOMALS19"/>
</dbReference>
<dbReference type="SUPFAM" id="SSF54570">
    <property type="entry name" value="Ribosomal protein S19"/>
    <property type="match status" value="1"/>
</dbReference>
<dbReference type="PROSITE" id="PS00323">
    <property type="entry name" value="RIBOSOMAL_S19"/>
    <property type="match status" value="1"/>
</dbReference>
<accession>B3PK41</accession>
<evidence type="ECO:0000255" key="1">
    <source>
        <dbReference type="HAMAP-Rule" id="MF_00531"/>
    </source>
</evidence>
<evidence type="ECO:0000305" key="2"/>
<proteinExistence type="inferred from homology"/>
<organism>
    <name type="scientific">Cellvibrio japonicus (strain Ueda107)</name>
    <name type="common">Pseudomonas fluorescens subsp. cellulosa</name>
    <dbReference type="NCBI Taxonomy" id="498211"/>
    <lineage>
        <taxon>Bacteria</taxon>
        <taxon>Pseudomonadati</taxon>
        <taxon>Pseudomonadota</taxon>
        <taxon>Gammaproteobacteria</taxon>
        <taxon>Cellvibrionales</taxon>
        <taxon>Cellvibrionaceae</taxon>
        <taxon>Cellvibrio</taxon>
    </lineage>
</organism>
<comment type="function">
    <text evidence="1">Protein S19 forms a complex with S13 that binds strongly to the 16S ribosomal RNA.</text>
</comment>
<comment type="similarity">
    <text evidence="1">Belongs to the universal ribosomal protein uS19 family.</text>
</comment>